<accession>B4TE14</accession>
<keyword id="KW-0997">Cell inner membrane</keyword>
<keyword id="KW-1003">Cell membrane</keyword>
<keyword id="KW-0963">Cytoplasm</keyword>
<keyword id="KW-0342">GTP-binding</keyword>
<keyword id="KW-0472">Membrane</keyword>
<keyword id="KW-0547">Nucleotide-binding</keyword>
<keyword id="KW-0690">Ribosome biogenesis</keyword>
<keyword id="KW-0694">RNA-binding</keyword>
<keyword id="KW-0699">rRNA-binding</keyword>
<gene>
    <name evidence="1" type="primary">era</name>
    <name type="ordered locus">SeHA_C2846</name>
</gene>
<comment type="function">
    <text evidence="1">An essential GTPase that binds both GDP and GTP, with rapid nucleotide exchange. Plays a role in 16S rRNA processing and 30S ribosomal subunit biogenesis and possibly also in cell cycle regulation and energy metabolism.</text>
</comment>
<comment type="subunit">
    <text evidence="1">Monomer.</text>
</comment>
<comment type="subcellular location">
    <subcellularLocation>
        <location>Cytoplasm</location>
    </subcellularLocation>
    <subcellularLocation>
        <location evidence="1">Cell inner membrane</location>
        <topology evidence="1">Peripheral membrane protein</topology>
    </subcellularLocation>
</comment>
<comment type="similarity">
    <text evidence="1 2">Belongs to the TRAFAC class TrmE-Era-EngA-EngB-Septin-like GTPase superfamily. Era GTPase family.</text>
</comment>
<protein>
    <recommendedName>
        <fullName evidence="1">GTPase Era</fullName>
    </recommendedName>
</protein>
<evidence type="ECO:0000255" key="1">
    <source>
        <dbReference type="HAMAP-Rule" id="MF_00367"/>
    </source>
</evidence>
<evidence type="ECO:0000255" key="2">
    <source>
        <dbReference type="PROSITE-ProRule" id="PRU01050"/>
    </source>
</evidence>
<dbReference type="EMBL" id="CP001120">
    <property type="protein sequence ID" value="ACF69584.1"/>
    <property type="molecule type" value="Genomic_DNA"/>
</dbReference>
<dbReference type="RefSeq" id="WP_000102232.1">
    <property type="nucleotide sequence ID" value="NC_011083.1"/>
</dbReference>
<dbReference type="SMR" id="B4TE14"/>
<dbReference type="KEGG" id="seh:SeHA_C2846"/>
<dbReference type="HOGENOM" id="CLU_038009_1_2_6"/>
<dbReference type="Proteomes" id="UP000001866">
    <property type="component" value="Chromosome"/>
</dbReference>
<dbReference type="GO" id="GO:0005829">
    <property type="term" value="C:cytosol"/>
    <property type="evidence" value="ECO:0007669"/>
    <property type="project" value="TreeGrafter"/>
</dbReference>
<dbReference type="GO" id="GO:0005886">
    <property type="term" value="C:plasma membrane"/>
    <property type="evidence" value="ECO:0007669"/>
    <property type="project" value="UniProtKB-SubCell"/>
</dbReference>
<dbReference type="GO" id="GO:0005525">
    <property type="term" value="F:GTP binding"/>
    <property type="evidence" value="ECO:0007669"/>
    <property type="project" value="UniProtKB-UniRule"/>
</dbReference>
<dbReference type="GO" id="GO:0003924">
    <property type="term" value="F:GTPase activity"/>
    <property type="evidence" value="ECO:0007669"/>
    <property type="project" value="UniProtKB-UniRule"/>
</dbReference>
<dbReference type="GO" id="GO:0043024">
    <property type="term" value="F:ribosomal small subunit binding"/>
    <property type="evidence" value="ECO:0007669"/>
    <property type="project" value="TreeGrafter"/>
</dbReference>
<dbReference type="GO" id="GO:0070181">
    <property type="term" value="F:small ribosomal subunit rRNA binding"/>
    <property type="evidence" value="ECO:0007669"/>
    <property type="project" value="UniProtKB-UniRule"/>
</dbReference>
<dbReference type="GO" id="GO:0000028">
    <property type="term" value="P:ribosomal small subunit assembly"/>
    <property type="evidence" value="ECO:0007669"/>
    <property type="project" value="TreeGrafter"/>
</dbReference>
<dbReference type="CDD" id="cd04163">
    <property type="entry name" value="Era"/>
    <property type="match status" value="1"/>
</dbReference>
<dbReference type="CDD" id="cd22534">
    <property type="entry name" value="KH-II_Era"/>
    <property type="match status" value="1"/>
</dbReference>
<dbReference type="FunFam" id="3.30.300.20:FF:000003">
    <property type="entry name" value="GTPase Era"/>
    <property type="match status" value="1"/>
</dbReference>
<dbReference type="FunFam" id="3.40.50.300:FF:000094">
    <property type="entry name" value="GTPase Era"/>
    <property type="match status" value="1"/>
</dbReference>
<dbReference type="Gene3D" id="3.30.300.20">
    <property type="match status" value="1"/>
</dbReference>
<dbReference type="Gene3D" id="3.40.50.300">
    <property type="entry name" value="P-loop containing nucleotide triphosphate hydrolases"/>
    <property type="match status" value="1"/>
</dbReference>
<dbReference type="HAMAP" id="MF_00367">
    <property type="entry name" value="GTPase_Era"/>
    <property type="match status" value="1"/>
</dbReference>
<dbReference type="InterPro" id="IPR030388">
    <property type="entry name" value="G_ERA_dom"/>
</dbReference>
<dbReference type="InterPro" id="IPR006073">
    <property type="entry name" value="GTP-bd"/>
</dbReference>
<dbReference type="InterPro" id="IPR005662">
    <property type="entry name" value="GTPase_Era-like"/>
</dbReference>
<dbReference type="InterPro" id="IPR015946">
    <property type="entry name" value="KH_dom-like_a/b"/>
</dbReference>
<dbReference type="InterPro" id="IPR004044">
    <property type="entry name" value="KH_dom_type_2"/>
</dbReference>
<dbReference type="InterPro" id="IPR009019">
    <property type="entry name" value="KH_sf_prok-type"/>
</dbReference>
<dbReference type="InterPro" id="IPR027417">
    <property type="entry name" value="P-loop_NTPase"/>
</dbReference>
<dbReference type="InterPro" id="IPR005225">
    <property type="entry name" value="Small_GTP-bd"/>
</dbReference>
<dbReference type="NCBIfam" id="TIGR00436">
    <property type="entry name" value="era"/>
    <property type="match status" value="1"/>
</dbReference>
<dbReference type="NCBIfam" id="NF000908">
    <property type="entry name" value="PRK00089.1"/>
    <property type="match status" value="1"/>
</dbReference>
<dbReference type="NCBIfam" id="TIGR00231">
    <property type="entry name" value="small_GTP"/>
    <property type="match status" value="1"/>
</dbReference>
<dbReference type="PANTHER" id="PTHR42698">
    <property type="entry name" value="GTPASE ERA"/>
    <property type="match status" value="1"/>
</dbReference>
<dbReference type="PANTHER" id="PTHR42698:SF1">
    <property type="entry name" value="GTPASE ERA, MITOCHONDRIAL"/>
    <property type="match status" value="1"/>
</dbReference>
<dbReference type="Pfam" id="PF07650">
    <property type="entry name" value="KH_2"/>
    <property type="match status" value="1"/>
</dbReference>
<dbReference type="Pfam" id="PF01926">
    <property type="entry name" value="MMR_HSR1"/>
    <property type="match status" value="1"/>
</dbReference>
<dbReference type="SUPFAM" id="SSF52540">
    <property type="entry name" value="P-loop containing nucleoside triphosphate hydrolases"/>
    <property type="match status" value="1"/>
</dbReference>
<dbReference type="SUPFAM" id="SSF54814">
    <property type="entry name" value="Prokaryotic type KH domain (KH-domain type II)"/>
    <property type="match status" value="1"/>
</dbReference>
<dbReference type="PROSITE" id="PS51713">
    <property type="entry name" value="G_ERA"/>
    <property type="match status" value="1"/>
</dbReference>
<dbReference type="PROSITE" id="PS50823">
    <property type="entry name" value="KH_TYPE_2"/>
    <property type="match status" value="1"/>
</dbReference>
<name>ERA_SALHS</name>
<proteinExistence type="inferred from homology"/>
<sequence>MSTDKTYCGFIAIVGRPNVGKSTLLNKLLGQKISITSRKAQTTRHRIVGIHTEGPYQAIYVDTPGLHMEEKRAINRLMNKAASSSIGDVELVIFVVEGTRWTPDDEMVLNKLRDGKAPVILAVNKVDNVQEKVDLLPHLQFLASQMNFLDIVPISAETGMNVDTIAGIVRKHLPEAIHHFPEDYITDRSQRFMASEIIREKLMRFLGAELPYSVTVEIERFVTNERGGYDINGLILVEREGQKKMVIGNKGAKIKTIGIEARKDMQEMFEAPVHLELWVKVKSGWADDERALRSLGYVDDL</sequence>
<reference key="1">
    <citation type="journal article" date="2011" name="J. Bacteriol.">
        <title>Comparative genomics of 28 Salmonella enterica isolates: evidence for CRISPR-mediated adaptive sublineage evolution.</title>
        <authorList>
            <person name="Fricke W.F."/>
            <person name="Mammel M.K."/>
            <person name="McDermott P.F."/>
            <person name="Tartera C."/>
            <person name="White D.G."/>
            <person name="Leclerc J.E."/>
            <person name="Ravel J."/>
            <person name="Cebula T.A."/>
        </authorList>
    </citation>
    <scope>NUCLEOTIDE SEQUENCE [LARGE SCALE GENOMIC DNA]</scope>
    <source>
        <strain>SL476</strain>
    </source>
</reference>
<feature type="chain" id="PRO_1000121351" description="GTPase Era">
    <location>
        <begin position="1"/>
        <end position="301"/>
    </location>
</feature>
<feature type="domain" description="Era-type G" evidence="2">
    <location>
        <begin position="7"/>
        <end position="175"/>
    </location>
</feature>
<feature type="domain" description="KH type-2" evidence="1">
    <location>
        <begin position="206"/>
        <end position="283"/>
    </location>
</feature>
<feature type="region of interest" description="G1" evidence="2">
    <location>
        <begin position="15"/>
        <end position="22"/>
    </location>
</feature>
<feature type="region of interest" description="G2" evidence="2">
    <location>
        <begin position="41"/>
        <end position="45"/>
    </location>
</feature>
<feature type="region of interest" description="G3" evidence="2">
    <location>
        <begin position="62"/>
        <end position="65"/>
    </location>
</feature>
<feature type="region of interest" description="G4" evidence="2">
    <location>
        <begin position="124"/>
        <end position="127"/>
    </location>
</feature>
<feature type="region of interest" description="G5" evidence="2">
    <location>
        <begin position="154"/>
        <end position="156"/>
    </location>
</feature>
<feature type="binding site" evidence="1">
    <location>
        <begin position="15"/>
        <end position="22"/>
    </location>
    <ligand>
        <name>GTP</name>
        <dbReference type="ChEBI" id="CHEBI:37565"/>
    </ligand>
</feature>
<feature type="binding site" evidence="1">
    <location>
        <begin position="62"/>
        <end position="66"/>
    </location>
    <ligand>
        <name>GTP</name>
        <dbReference type="ChEBI" id="CHEBI:37565"/>
    </ligand>
</feature>
<feature type="binding site" evidence="1">
    <location>
        <begin position="124"/>
        <end position="127"/>
    </location>
    <ligand>
        <name>GTP</name>
        <dbReference type="ChEBI" id="CHEBI:37565"/>
    </ligand>
</feature>
<organism>
    <name type="scientific">Salmonella heidelberg (strain SL476)</name>
    <dbReference type="NCBI Taxonomy" id="454169"/>
    <lineage>
        <taxon>Bacteria</taxon>
        <taxon>Pseudomonadati</taxon>
        <taxon>Pseudomonadota</taxon>
        <taxon>Gammaproteobacteria</taxon>
        <taxon>Enterobacterales</taxon>
        <taxon>Enterobacteriaceae</taxon>
        <taxon>Salmonella</taxon>
    </lineage>
</organism>